<evidence type="ECO:0000255" key="1">
    <source>
        <dbReference type="HAMAP-Rule" id="MF_00386"/>
    </source>
</evidence>
<dbReference type="EMBL" id="AE017198">
    <property type="protein sequence ID" value="AAS08765.1"/>
    <property type="molecule type" value="Genomic_DNA"/>
</dbReference>
<dbReference type="KEGG" id="ljo:LJ_0944"/>
<dbReference type="eggNOG" id="COG0759">
    <property type="taxonomic scope" value="Bacteria"/>
</dbReference>
<dbReference type="HOGENOM" id="CLU_144811_2_2_9"/>
<dbReference type="Proteomes" id="UP000000581">
    <property type="component" value="Chromosome"/>
</dbReference>
<dbReference type="GO" id="GO:0005886">
    <property type="term" value="C:plasma membrane"/>
    <property type="evidence" value="ECO:0007669"/>
    <property type="project" value="UniProtKB-SubCell"/>
</dbReference>
<dbReference type="HAMAP" id="MF_00386">
    <property type="entry name" value="UPF0161_YidD"/>
    <property type="match status" value="1"/>
</dbReference>
<dbReference type="InterPro" id="IPR002696">
    <property type="entry name" value="Membr_insert_effic_factor_YidD"/>
</dbReference>
<dbReference type="NCBIfam" id="TIGR00278">
    <property type="entry name" value="membrane protein insertion efficiency factor YidD"/>
    <property type="match status" value="1"/>
</dbReference>
<dbReference type="PANTHER" id="PTHR33383">
    <property type="entry name" value="MEMBRANE PROTEIN INSERTION EFFICIENCY FACTOR-RELATED"/>
    <property type="match status" value="1"/>
</dbReference>
<dbReference type="PANTHER" id="PTHR33383:SF1">
    <property type="entry name" value="MEMBRANE PROTEIN INSERTION EFFICIENCY FACTOR-RELATED"/>
    <property type="match status" value="1"/>
</dbReference>
<dbReference type="Pfam" id="PF01809">
    <property type="entry name" value="YidD"/>
    <property type="match status" value="1"/>
</dbReference>
<dbReference type="SMART" id="SM01234">
    <property type="entry name" value="Haemolytic"/>
    <property type="match status" value="1"/>
</dbReference>
<reference key="1">
    <citation type="journal article" date="2004" name="Proc. Natl. Acad. Sci. U.S.A.">
        <title>The genome sequence of the probiotic intestinal bacterium Lactobacillus johnsonii NCC 533.</title>
        <authorList>
            <person name="Pridmore R.D."/>
            <person name="Berger B."/>
            <person name="Desiere F."/>
            <person name="Vilanova D."/>
            <person name="Barretto C."/>
            <person name="Pittet A.-C."/>
            <person name="Zwahlen M.-C."/>
            <person name="Rouvet M."/>
            <person name="Altermann E."/>
            <person name="Barrangou R."/>
            <person name="Mollet B."/>
            <person name="Mercenier A."/>
            <person name="Klaenhammer T."/>
            <person name="Arigoni F."/>
            <person name="Schell M.A."/>
        </authorList>
    </citation>
    <scope>NUCLEOTIDE SEQUENCE [LARGE SCALE GENOMIC DNA]</scope>
    <source>
        <strain>CNCM I-1225 / La1 / NCC 533</strain>
    </source>
</reference>
<comment type="function">
    <text evidence="1">Could be involved in insertion of integral membrane proteins into the membrane.</text>
</comment>
<comment type="subcellular location">
    <subcellularLocation>
        <location evidence="1">Cell membrane</location>
        <topology evidence="1">Peripheral membrane protein</topology>
        <orientation evidence="1">Cytoplasmic side</orientation>
    </subcellularLocation>
</comment>
<comment type="similarity">
    <text evidence="1">Belongs to the UPF0161 family.</text>
</comment>
<protein>
    <recommendedName>
        <fullName evidence="1">Putative membrane protein insertion efficiency factor</fullName>
    </recommendedName>
</protein>
<keyword id="KW-1003">Cell membrane</keyword>
<keyword id="KW-0472">Membrane</keyword>
<feature type="chain" id="PRO_0000171831" description="Putative membrane protein insertion efficiency factor">
    <location>
        <begin position="1"/>
        <end position="97"/>
    </location>
</feature>
<accession>P61470</accession>
<sequence>MNKLLIGLVNVYKKFISPILPPTCRYYPTCSSYMIDALKKHGAILGLIMGLARILRCNPFIKGGVDPVPDYFTLRRNPHPERYEDEIIAQAFHSNKK</sequence>
<gene>
    <name type="ordered locus">LJ_0944</name>
</gene>
<name>YIDD_LACJO</name>
<proteinExistence type="inferred from homology"/>
<organism>
    <name type="scientific">Lactobacillus johnsonii (strain CNCM I-12250 / La1 / NCC 533)</name>
    <dbReference type="NCBI Taxonomy" id="257314"/>
    <lineage>
        <taxon>Bacteria</taxon>
        <taxon>Bacillati</taxon>
        <taxon>Bacillota</taxon>
        <taxon>Bacilli</taxon>
        <taxon>Lactobacillales</taxon>
        <taxon>Lactobacillaceae</taxon>
        <taxon>Lactobacillus</taxon>
    </lineage>
</organism>